<comment type="function">
    <text evidence="1">Removes the formyl group from the N-terminal Met of newly synthesized proteins. Requires at least a dipeptide for an efficient rate of reaction. N-terminal L-methionine is a prerequisite for activity but the enzyme has broad specificity at other positions.</text>
</comment>
<comment type="catalytic activity">
    <reaction evidence="1">
        <text>N-terminal N-formyl-L-methionyl-[peptide] + H2O = N-terminal L-methionyl-[peptide] + formate</text>
        <dbReference type="Rhea" id="RHEA:24420"/>
        <dbReference type="Rhea" id="RHEA-COMP:10639"/>
        <dbReference type="Rhea" id="RHEA-COMP:10640"/>
        <dbReference type="ChEBI" id="CHEBI:15377"/>
        <dbReference type="ChEBI" id="CHEBI:15740"/>
        <dbReference type="ChEBI" id="CHEBI:49298"/>
        <dbReference type="ChEBI" id="CHEBI:64731"/>
        <dbReference type="EC" id="3.5.1.88"/>
    </reaction>
</comment>
<comment type="cofactor">
    <cofactor evidence="1">
        <name>Fe(2+)</name>
        <dbReference type="ChEBI" id="CHEBI:29033"/>
    </cofactor>
    <text evidence="1">Binds 1 Fe(2+) ion.</text>
</comment>
<comment type="similarity">
    <text evidence="1">Belongs to the polypeptide deformylase family.</text>
</comment>
<accession>B0UWZ5</accession>
<gene>
    <name evidence="1" type="primary">def</name>
    <name type="ordered locus">HSM_1934</name>
</gene>
<feature type="chain" id="PRO_1000076945" description="Peptide deformylase">
    <location>
        <begin position="1"/>
        <end position="170"/>
    </location>
</feature>
<feature type="active site" evidence="1">
    <location>
        <position position="134"/>
    </location>
</feature>
<feature type="binding site" evidence="1">
    <location>
        <position position="91"/>
    </location>
    <ligand>
        <name>Fe cation</name>
        <dbReference type="ChEBI" id="CHEBI:24875"/>
    </ligand>
</feature>
<feature type="binding site" evidence="1">
    <location>
        <position position="133"/>
    </location>
    <ligand>
        <name>Fe cation</name>
        <dbReference type="ChEBI" id="CHEBI:24875"/>
    </ligand>
</feature>
<feature type="binding site" evidence="1">
    <location>
        <position position="137"/>
    </location>
    <ligand>
        <name>Fe cation</name>
        <dbReference type="ChEBI" id="CHEBI:24875"/>
    </ligand>
</feature>
<dbReference type="EC" id="3.5.1.88" evidence="1"/>
<dbReference type="EMBL" id="CP000947">
    <property type="protein sequence ID" value="ACA31726.1"/>
    <property type="molecule type" value="Genomic_DNA"/>
</dbReference>
<dbReference type="RefSeq" id="WP_012341013.1">
    <property type="nucleotide sequence ID" value="NC_010519.1"/>
</dbReference>
<dbReference type="SMR" id="B0UWZ5"/>
<dbReference type="STRING" id="228400.HSM_1934"/>
<dbReference type="GeneID" id="31488245"/>
<dbReference type="KEGG" id="hsm:HSM_1934"/>
<dbReference type="HOGENOM" id="CLU_061901_2_1_6"/>
<dbReference type="GO" id="GO:0046872">
    <property type="term" value="F:metal ion binding"/>
    <property type="evidence" value="ECO:0007669"/>
    <property type="project" value="UniProtKB-KW"/>
</dbReference>
<dbReference type="GO" id="GO:0042586">
    <property type="term" value="F:peptide deformylase activity"/>
    <property type="evidence" value="ECO:0007669"/>
    <property type="project" value="UniProtKB-UniRule"/>
</dbReference>
<dbReference type="GO" id="GO:0043686">
    <property type="term" value="P:co-translational protein modification"/>
    <property type="evidence" value="ECO:0007669"/>
    <property type="project" value="TreeGrafter"/>
</dbReference>
<dbReference type="GO" id="GO:0006412">
    <property type="term" value="P:translation"/>
    <property type="evidence" value="ECO:0007669"/>
    <property type="project" value="UniProtKB-UniRule"/>
</dbReference>
<dbReference type="CDD" id="cd00487">
    <property type="entry name" value="Pep_deformylase"/>
    <property type="match status" value="1"/>
</dbReference>
<dbReference type="FunFam" id="3.90.45.10:FF:000001">
    <property type="entry name" value="Peptide deformylase"/>
    <property type="match status" value="1"/>
</dbReference>
<dbReference type="Gene3D" id="3.90.45.10">
    <property type="entry name" value="Peptide deformylase"/>
    <property type="match status" value="1"/>
</dbReference>
<dbReference type="HAMAP" id="MF_00163">
    <property type="entry name" value="Pep_deformylase"/>
    <property type="match status" value="1"/>
</dbReference>
<dbReference type="InterPro" id="IPR023635">
    <property type="entry name" value="Peptide_deformylase"/>
</dbReference>
<dbReference type="InterPro" id="IPR036821">
    <property type="entry name" value="Peptide_deformylase_sf"/>
</dbReference>
<dbReference type="NCBIfam" id="TIGR00079">
    <property type="entry name" value="pept_deformyl"/>
    <property type="match status" value="1"/>
</dbReference>
<dbReference type="NCBIfam" id="NF001159">
    <property type="entry name" value="PRK00150.1-3"/>
    <property type="match status" value="1"/>
</dbReference>
<dbReference type="PANTHER" id="PTHR10458">
    <property type="entry name" value="PEPTIDE DEFORMYLASE"/>
    <property type="match status" value="1"/>
</dbReference>
<dbReference type="PANTHER" id="PTHR10458:SF21">
    <property type="entry name" value="PEPTIDE DEFORMYLASE"/>
    <property type="match status" value="1"/>
</dbReference>
<dbReference type="Pfam" id="PF01327">
    <property type="entry name" value="Pep_deformylase"/>
    <property type="match status" value="1"/>
</dbReference>
<dbReference type="PIRSF" id="PIRSF004749">
    <property type="entry name" value="Pep_def"/>
    <property type="match status" value="1"/>
</dbReference>
<dbReference type="PRINTS" id="PR01576">
    <property type="entry name" value="PDEFORMYLASE"/>
</dbReference>
<dbReference type="SUPFAM" id="SSF56420">
    <property type="entry name" value="Peptide deformylase"/>
    <property type="match status" value="1"/>
</dbReference>
<name>DEF_HISS2</name>
<sequence length="170" mass="19320">MALLNVLIYPDERLKTVAEPVSVFDEELQTFIDNMFETMYHEEGIGLAATQVNVHKRIITIDIEGTKENQIVLINPKILESFGETGIEEGCLSLPGLRGFVPRKETVKVKAQNRQGEEFMLDADGLLAICIQHEIDHLNGIVFADHLSPLKRQRMKEKLLKLQKQIAKNR</sequence>
<keyword id="KW-0378">Hydrolase</keyword>
<keyword id="KW-0408">Iron</keyword>
<keyword id="KW-0479">Metal-binding</keyword>
<keyword id="KW-0648">Protein biosynthesis</keyword>
<reference key="1">
    <citation type="submission" date="2008-02" db="EMBL/GenBank/DDBJ databases">
        <title>Complete sequence of Haemophilus somnus 2336.</title>
        <authorList>
            <consortium name="US DOE Joint Genome Institute"/>
            <person name="Siddaramappa S."/>
            <person name="Duncan A.J."/>
            <person name="Challacombe J.F."/>
            <person name="Rainey D."/>
            <person name="Gillaspy A.F."/>
            <person name="Carson M."/>
            <person name="Gipson J."/>
            <person name="Gipson M."/>
            <person name="Bruce D."/>
            <person name="Detter J.C."/>
            <person name="Han C.S."/>
            <person name="Land M."/>
            <person name="Tapia R."/>
            <person name="Thompson L.S."/>
            <person name="Orvis J."/>
            <person name="Zaitshik J."/>
            <person name="Barnes G."/>
            <person name="Brettin T.S."/>
            <person name="Dyer D.W."/>
            <person name="Inzana T.J."/>
        </authorList>
    </citation>
    <scope>NUCLEOTIDE SEQUENCE [LARGE SCALE GENOMIC DNA]</scope>
    <source>
        <strain>2336</strain>
    </source>
</reference>
<proteinExistence type="inferred from homology"/>
<organism>
    <name type="scientific">Histophilus somni (strain 2336)</name>
    <name type="common">Haemophilus somnus</name>
    <dbReference type="NCBI Taxonomy" id="228400"/>
    <lineage>
        <taxon>Bacteria</taxon>
        <taxon>Pseudomonadati</taxon>
        <taxon>Pseudomonadota</taxon>
        <taxon>Gammaproteobacteria</taxon>
        <taxon>Pasteurellales</taxon>
        <taxon>Pasteurellaceae</taxon>
        <taxon>Histophilus</taxon>
    </lineage>
</organism>
<protein>
    <recommendedName>
        <fullName evidence="1">Peptide deformylase</fullName>
        <shortName evidence="1">PDF</shortName>
        <ecNumber evidence="1">3.5.1.88</ecNumber>
    </recommendedName>
    <alternativeName>
        <fullName evidence="1">Polypeptide deformylase</fullName>
    </alternativeName>
</protein>
<evidence type="ECO:0000255" key="1">
    <source>
        <dbReference type="HAMAP-Rule" id="MF_00163"/>
    </source>
</evidence>